<accession>Q8Z5S1</accession>
<comment type="subcellular location">
    <subcellularLocation>
        <location evidence="2">Bacterial flagellum basal body</location>
    </subcellularLocation>
</comment>
<comment type="similarity">
    <text evidence="2">Belongs to the FliE family.</text>
</comment>
<organism>
    <name type="scientific">Salmonella typhi</name>
    <dbReference type="NCBI Taxonomy" id="90370"/>
    <lineage>
        <taxon>Bacteria</taxon>
        <taxon>Pseudomonadati</taxon>
        <taxon>Pseudomonadota</taxon>
        <taxon>Gammaproteobacteria</taxon>
        <taxon>Enterobacterales</taxon>
        <taxon>Enterobacteriaceae</taxon>
        <taxon>Salmonella</taxon>
    </lineage>
</organism>
<keyword id="KW-0975">Bacterial flagellum</keyword>
<proteinExistence type="inferred from homology"/>
<name>FLIE_SALTI</name>
<reference key="1">
    <citation type="journal article" date="2001" name="Nature">
        <title>Complete genome sequence of a multiple drug resistant Salmonella enterica serovar Typhi CT18.</title>
        <authorList>
            <person name="Parkhill J."/>
            <person name="Dougan G."/>
            <person name="James K.D."/>
            <person name="Thomson N.R."/>
            <person name="Pickard D."/>
            <person name="Wain J."/>
            <person name="Churcher C.M."/>
            <person name="Mungall K.L."/>
            <person name="Bentley S.D."/>
            <person name="Holden M.T.G."/>
            <person name="Sebaihia M."/>
            <person name="Baker S."/>
            <person name="Basham D."/>
            <person name="Brooks K."/>
            <person name="Chillingworth T."/>
            <person name="Connerton P."/>
            <person name="Cronin A."/>
            <person name="Davis P."/>
            <person name="Davies R.M."/>
            <person name="Dowd L."/>
            <person name="White N."/>
            <person name="Farrar J."/>
            <person name="Feltwell T."/>
            <person name="Hamlin N."/>
            <person name="Haque A."/>
            <person name="Hien T.T."/>
            <person name="Holroyd S."/>
            <person name="Jagels K."/>
            <person name="Krogh A."/>
            <person name="Larsen T.S."/>
            <person name="Leather S."/>
            <person name="Moule S."/>
            <person name="O'Gaora P."/>
            <person name="Parry C."/>
            <person name="Quail M.A."/>
            <person name="Rutherford K.M."/>
            <person name="Simmonds M."/>
            <person name="Skelton J."/>
            <person name="Stevens K."/>
            <person name="Whitehead S."/>
            <person name="Barrell B.G."/>
        </authorList>
    </citation>
    <scope>NUCLEOTIDE SEQUENCE [LARGE SCALE GENOMIC DNA]</scope>
    <source>
        <strain>CT18</strain>
    </source>
</reference>
<reference key="2">
    <citation type="journal article" date="2003" name="J. Bacteriol.">
        <title>Comparative genomics of Salmonella enterica serovar Typhi strains Ty2 and CT18.</title>
        <authorList>
            <person name="Deng W."/>
            <person name="Liou S.-R."/>
            <person name="Plunkett G. III"/>
            <person name="Mayhew G.F."/>
            <person name="Rose D.J."/>
            <person name="Burland V."/>
            <person name="Kodoyianni V."/>
            <person name="Schwartz D.C."/>
            <person name="Blattner F.R."/>
        </authorList>
    </citation>
    <scope>NUCLEOTIDE SEQUENCE [LARGE SCALE GENOMIC DNA]</scope>
    <source>
        <strain>ATCC 700931 / Ty2</strain>
    </source>
</reference>
<sequence>MAAIQGIEGGISQLQATAMAANGQETHSQSTVSFAGQLHAALDRISDRQTAARVQAEKFTLGEPGIALNDVMADMQKASVSMQMGIQVRNKLVAAYQEVMSMQV</sequence>
<dbReference type="EMBL" id="AL513382">
    <property type="protein sequence ID" value="CAD05716.1"/>
    <property type="molecule type" value="Genomic_DNA"/>
</dbReference>
<dbReference type="EMBL" id="AE014613">
    <property type="protein sequence ID" value="AAO68587.1"/>
    <property type="molecule type" value="Genomic_DNA"/>
</dbReference>
<dbReference type="RefSeq" id="NP_456529.1">
    <property type="nucleotide sequence ID" value="NC_003198.1"/>
</dbReference>
<dbReference type="RefSeq" id="WP_000719033.1">
    <property type="nucleotide sequence ID" value="NZ_WSUR01000004.1"/>
</dbReference>
<dbReference type="SMR" id="Q8Z5S1"/>
<dbReference type="STRING" id="220341.gene:17586084"/>
<dbReference type="KEGG" id="stt:t0909"/>
<dbReference type="KEGG" id="sty:STY2176"/>
<dbReference type="PATRIC" id="fig|220341.7.peg.2190"/>
<dbReference type="eggNOG" id="COG1677">
    <property type="taxonomic scope" value="Bacteria"/>
</dbReference>
<dbReference type="HOGENOM" id="CLU_147249_0_2_6"/>
<dbReference type="OMA" id="NDVMIDM"/>
<dbReference type="OrthoDB" id="8909229at2"/>
<dbReference type="Proteomes" id="UP000000541">
    <property type="component" value="Chromosome"/>
</dbReference>
<dbReference type="Proteomes" id="UP000002670">
    <property type="component" value="Chromosome"/>
</dbReference>
<dbReference type="GO" id="GO:0009425">
    <property type="term" value="C:bacterial-type flagellum basal body"/>
    <property type="evidence" value="ECO:0007669"/>
    <property type="project" value="UniProtKB-SubCell"/>
</dbReference>
<dbReference type="GO" id="GO:0003774">
    <property type="term" value="F:cytoskeletal motor activity"/>
    <property type="evidence" value="ECO:0007669"/>
    <property type="project" value="InterPro"/>
</dbReference>
<dbReference type="GO" id="GO:0005198">
    <property type="term" value="F:structural molecule activity"/>
    <property type="evidence" value="ECO:0007669"/>
    <property type="project" value="InterPro"/>
</dbReference>
<dbReference type="GO" id="GO:0071973">
    <property type="term" value="P:bacterial-type flagellum-dependent cell motility"/>
    <property type="evidence" value="ECO:0007669"/>
    <property type="project" value="InterPro"/>
</dbReference>
<dbReference type="HAMAP" id="MF_00724">
    <property type="entry name" value="FliE"/>
    <property type="match status" value="1"/>
</dbReference>
<dbReference type="InterPro" id="IPR001624">
    <property type="entry name" value="FliE"/>
</dbReference>
<dbReference type="NCBIfam" id="TIGR00205">
    <property type="entry name" value="fliE"/>
    <property type="match status" value="1"/>
</dbReference>
<dbReference type="PANTHER" id="PTHR34653">
    <property type="match status" value="1"/>
</dbReference>
<dbReference type="PANTHER" id="PTHR34653:SF1">
    <property type="entry name" value="FLAGELLAR HOOK-BASAL BODY COMPLEX PROTEIN FLIE"/>
    <property type="match status" value="1"/>
</dbReference>
<dbReference type="Pfam" id="PF02049">
    <property type="entry name" value="FliE"/>
    <property type="match status" value="1"/>
</dbReference>
<dbReference type="PRINTS" id="PR01006">
    <property type="entry name" value="FLGHOOKFLIE"/>
</dbReference>
<evidence type="ECO:0000250" key="1"/>
<evidence type="ECO:0000255" key="2">
    <source>
        <dbReference type="HAMAP-Rule" id="MF_00724"/>
    </source>
</evidence>
<feature type="initiator methionine" description="Removed" evidence="1">
    <location>
        <position position="1"/>
    </location>
</feature>
<feature type="chain" id="PRO_0000105563" description="Flagellar hook-basal body complex protein FliE">
    <location>
        <begin position="2"/>
        <end position="104"/>
    </location>
</feature>
<protein>
    <recommendedName>
        <fullName evidence="2">Flagellar hook-basal body complex protein FliE</fullName>
    </recommendedName>
</protein>
<gene>
    <name evidence="2" type="primary">fliE</name>
    <name type="ordered locus">STY2176</name>
    <name type="ordered locus">t0909</name>
</gene>